<evidence type="ECO:0000250" key="1"/>
<evidence type="ECO:0000250" key="2">
    <source>
        <dbReference type="UniProtKB" id="O89038"/>
    </source>
</evidence>
<evidence type="ECO:0000250" key="3">
    <source>
        <dbReference type="UniProtKB" id="Q14814"/>
    </source>
</evidence>
<evidence type="ECO:0000255" key="4"/>
<evidence type="ECO:0000255" key="5">
    <source>
        <dbReference type="PROSITE-ProRule" id="PRU00251"/>
    </source>
</evidence>
<evidence type="ECO:0000256" key="6">
    <source>
        <dbReference type="SAM" id="MobiDB-lite"/>
    </source>
</evidence>
<evidence type="ECO:0000269" key="7">
    <source>
    </source>
</evidence>
<evidence type="ECO:0000269" key="8">
    <source>
    </source>
</evidence>
<evidence type="ECO:0000269" key="9">
    <source>
    </source>
</evidence>
<evidence type="ECO:0000269" key="10">
    <source>
    </source>
</evidence>
<evidence type="ECO:0000269" key="11">
    <source>
    </source>
</evidence>
<evidence type="ECO:0000303" key="12">
    <source>
    </source>
</evidence>
<evidence type="ECO:0000305" key="13"/>
<evidence type="ECO:0007744" key="14">
    <source>
    </source>
</evidence>
<evidence type="ECO:0007744" key="15">
    <source>
    </source>
</evidence>
<sequence length="514" mass="55065">MGRKKIQIQRITDERNRQVTFTKRKFGLMKKAYELSVLCDCEIALIIFNHSNKLFQYASTDMDKVLLKYTEYNEPHESRTNADIIETLRKKGFNGCDSPEPDGEDSLEQSPLLEDKYRRASEELDGLFRRYGSSVPAPNFAMPVTVPVSNQSSMQFSNPSSSLVTPSLVTSSLTDPRLLSPQQPALQRNSVSPGLPQRPASAGAMLGGDLNSANGACPSPVGNGYVSARASPGLLPVANGNSLNKVIPAKSPPPPTHNTQLGAPSRKPDLRVITSQGGKGLMHHLTEDHLDLNNAQRLGVSQSTHSLTTPVVSVATPSLLSQGLPFSSMPTAYNTDYQLPSAELSSLPAFSSPAGLALGNVTAWQQPQPPQQPQPPQPPQSQPQPPQPQPQQPPQQQPHLVPVSLSNLIPGSPLPHVGAALTVTTHPHISIKSEPVSPSRERSPAPPPPAVFPAARPEPGEGLSSPAGGSYETGDRDDGRGDFGPTLGLLRPAPEPEAEGSAVKRMRLDTWTLK</sequence>
<comment type="function">
    <text evidence="8 10">Transcriptional activator which binds specifically to the MEF2 element, 5'-YTA[AT](4)TAR-3', found in numerous muscle-specific, growth factor- and stress-induced genes. Mediates cellular functions not only in skeletal and cardiac muscle development, but also in neuronal differentiation and survival. Plays diverse roles in the control of cell growth, survival and apoptosis via p38 MAPK signaling in muscle-specific and/or growth factor-related transcription. Plays a critical role in the regulation of neuronal apoptosis.</text>
</comment>
<comment type="subunit">
    <text evidence="2 3 9 10">Forms a complex with class II HDACs in undifferentiating cells. On myogenic differentiation, HDACs are released into the cytoplasm allowing MEF2s to interact with other proteins for activation. Interacts with HDAC4 (in undifferentiating cells); the interaction translocates MEF2D to nuclear dots. Forms a heterodimer with MEF2A (By similarity). Interacts with MAPK7; the interaction phosphorylates but does not activate MEF2D (By similarity). Interacts with MYOG. Interacts with CCAR2 and HDAC3 (By similarity).</text>
</comment>
<comment type="subcellular location">
    <subcellularLocation>
        <location evidence="5 10">Nucleus</location>
    </subcellularLocation>
    <text evidence="1">Translocated by HDAC4 to nuclear dots.</text>
</comment>
<comment type="alternative products">
    <event type="alternative splicing"/>
    <isoform>
        <id>Q63943-1</id>
        <name>Non-muscle</name>
        <sequence type="displayed"/>
    </isoform>
    <isoform>
        <id>Q63943-2</id>
        <name>Muscle</name>
        <sequence type="described" ref="VSP_006253 VSP_006254"/>
    </isoform>
</comment>
<comment type="tissue specificity">
    <text evidence="7 8 11">Widely expressed though mainly restricted to skeletal and cardiac muscle, brain, neurons and lymphocytes. Differentially expressed depending on if isoforms contain the beta domain or not, with the total expression of the beta domain-lacking isoforms vastly exceeding that of the beta domain-containing isoforms. Isoforms containing the beta domain are expressed primarily in skeletal and cardiac muscle and in brain. Also present in lung and testis. Splicing to include the beta domain is induced in differentiating myocytes. Isoforms lacking the beta domain are expressed less abundantly in skeletal muscle, brain and lymphocytes, and are uniquely found in ovary, liver, spleen and kidney. In embryos, the beta domain-containing and beta domain-lacking isoforms are equally expressed. Also expressed cerebellar granule neurons and other regions of the CNS. Highest levels in the olfactory bulb, cortex, hippocampus, thalamus and cerebellum.</text>
</comment>
<comment type="developmental stage">
    <text evidence="11">In the developing cerebellum, increasing levels after birth. The majority of this increase occurs around postnataL day 9 reaching a peak at postnatal day 15-18 which is maintained in adults.</text>
</comment>
<comment type="PTM">
    <text evidence="1">Phosphorylated on Ser-437 is which is required for Lys-432 sumoylation and inhibits transcriptional activity. Phosphorylation on this residue by CDK5 is dependent on p35 and calpains. Phosphorylated by PKA at Ser-121 and Ser-190 represses transcriptional activity in embryonic and postnatal skeletal muscle, and stabilizes protein levels. No in vitro phosphorylation by PKA on Thr-20. Phosphorylated and activated by CaMK4 (By similarity).</text>
</comment>
<comment type="PTM">
    <text evidence="3">Acetylated on Lys-432 by CREBBP. Acetylated by EP300. Deacetylated by SIRT1 and HDAC3 (By similarity).</text>
</comment>
<comment type="PTM">
    <text evidence="1">Sumoylated on Lys-432 with SUMO2 but not SUMO1; which inhibits transcriptional activity and myogenic activity. Desumoylated by SENP3 (By similarity).</text>
</comment>
<comment type="PTM">
    <text>Proteolytically cleaved in cerebellar granule neurons by caspase 7 following neurotoxicity. Preferentially cleaves the CDK5-mediated hyperphosphorylated form which leads to neuron apoptosis and transcriptional inactivation.</text>
</comment>
<comment type="similarity">
    <text evidence="13">Belongs to the MEF2 family.</text>
</comment>
<accession>Q63943</accession>
<accession>E9QKS9</accession>
<accession>Q63944</accession>
<keyword id="KW-0007">Acetylation</keyword>
<keyword id="KW-0010">Activator</keyword>
<keyword id="KW-0025">Alternative splicing</keyword>
<keyword id="KW-0053">Apoptosis</keyword>
<keyword id="KW-0217">Developmental protein</keyword>
<keyword id="KW-0221">Differentiation</keyword>
<keyword id="KW-0238">DNA-binding</keyword>
<keyword id="KW-1017">Isopeptide bond</keyword>
<keyword id="KW-0524">Neurogenesis</keyword>
<keyword id="KW-0539">Nucleus</keyword>
<keyword id="KW-0597">Phosphoprotein</keyword>
<keyword id="KW-1185">Reference proteome</keyword>
<keyword id="KW-0804">Transcription</keyword>
<keyword id="KW-0805">Transcription regulation</keyword>
<keyword id="KW-0832">Ubl conjugation</keyword>
<reference key="1">
    <citation type="journal article" date="1994" name="Mol. Cell. Biol.">
        <title>A Mef2 gene that generates a muscle-specific isoform via alternative mRNA splicing.</title>
        <authorList>
            <person name="Martin J.F."/>
            <person name="Miano J.M."/>
            <person name="Hustad C.M."/>
            <person name="Copeland N.G."/>
            <person name="Jenkins N.A."/>
            <person name="Olson E.N."/>
        </authorList>
    </citation>
    <scope>NUCLEOTIDE SEQUENCE [MRNA] (ISOFORMS MUSCLE AND NON-MUSCLE)</scope>
</reference>
<reference key="2">
    <citation type="journal article" date="2009" name="PLoS Biol.">
        <title>Lineage-specific biology revealed by a finished genome assembly of the mouse.</title>
        <authorList>
            <person name="Church D.M."/>
            <person name="Goodstadt L."/>
            <person name="Hillier L.W."/>
            <person name="Zody M.C."/>
            <person name="Goldstein S."/>
            <person name="She X."/>
            <person name="Bult C.J."/>
            <person name="Agarwala R."/>
            <person name="Cherry J.L."/>
            <person name="DiCuccio M."/>
            <person name="Hlavina W."/>
            <person name="Kapustin Y."/>
            <person name="Meric P."/>
            <person name="Maglott D."/>
            <person name="Birtle Z."/>
            <person name="Marques A.C."/>
            <person name="Graves T."/>
            <person name="Zhou S."/>
            <person name="Teague B."/>
            <person name="Potamousis K."/>
            <person name="Churas C."/>
            <person name="Place M."/>
            <person name="Herschleb J."/>
            <person name="Runnheim R."/>
            <person name="Forrest D."/>
            <person name="Amos-Landgraf J."/>
            <person name="Schwartz D.C."/>
            <person name="Cheng Z."/>
            <person name="Lindblad-Toh K."/>
            <person name="Eichler E.E."/>
            <person name="Ponting C.P."/>
        </authorList>
    </citation>
    <scope>NUCLEOTIDE SEQUENCE [LARGE SCALE GENOMIC DNA]</scope>
    <source>
        <strain>C57BL/6J</strain>
    </source>
</reference>
<reference key="3">
    <citation type="journal article" date="1996" name="Brain Res. Mol. Brain Res.">
        <title>The expression of MEF2 genes is implicated in CNS neuronal differentiation.</title>
        <authorList>
            <person name="Lin X."/>
            <person name="Shah S."/>
            <person name="Bulleit R.F."/>
        </authorList>
    </citation>
    <scope>TISSUE SPECIFICITY</scope>
    <scope>DEVELOPMENTAL STAGE</scope>
    <source>
        <tissue>Cerebellum</tissue>
    </source>
</reference>
<reference key="4">
    <citation type="journal article" date="2005" name="J. Biol. Chem.">
        <title>Alternative pre-mRNA splicing governs expression of a conserved acidic transactivation domain in myocyte enhancer factor 2 factors of striated muscle and brain.</title>
        <authorList>
            <person name="Zhu B."/>
            <person name="Ramachandran B."/>
            <person name="Gulick T."/>
        </authorList>
    </citation>
    <scope>TISSUE SPECIFICITY OF ISOFORMS</scope>
</reference>
<reference key="5">
    <citation type="journal article" date="2005" name="Mol. Cell. Biol.">
        <title>Regulation of MEF2 by histone deacetylase 4- and SIRT1 deacetylase-mediated lysine modifications.</title>
        <authorList>
            <person name="Zhao X."/>
            <person name="Sternsdorf T."/>
            <person name="Bolger T.A."/>
            <person name="Evans R.M."/>
            <person name="Yao T.-P."/>
        </authorList>
    </citation>
    <scope>SUMOYLATION</scope>
</reference>
<reference key="6">
    <citation type="journal article" date="2006" name="EMBO J.">
        <title>Skeletal muscle specification by myogenin and Mef2D via the SWI/SNF ATPase Brg1.</title>
        <authorList>
            <person name="Ohkawa Y."/>
            <person name="Marfella C.G."/>
            <person name="Imbalzano A.N."/>
        </authorList>
    </citation>
    <scope>INTERACTION WITH MYOG</scope>
</reference>
<reference key="7">
    <citation type="journal article" date="2006" name="J. Neurosci.">
        <title>Calpain-regulated p35/cdk5 plays a central role in dopaminergic neuron death through modulation of the transcription factor myocyte enhancer factor 2.</title>
        <authorList>
            <person name="Smith P.D."/>
            <person name="Mount M.P."/>
            <person name="Shree R."/>
            <person name="Callaghan S."/>
            <person name="Slack R.S."/>
            <person name="Anisman H."/>
            <person name="Vincent I."/>
            <person name="Wang X."/>
            <person name="Mao Z."/>
            <person name="Park D.S."/>
        </authorList>
    </citation>
    <scope>PHOSPHORYLATION AT SER-437</scope>
    <scope>FUNCTION</scope>
    <scope>TISSUE SPECIFICITY</scope>
    <scope>MUTAGENESIS OF SER-437</scope>
</reference>
<reference key="8">
    <citation type="journal article" date="2008" name="Mol. Cell. Biol.">
        <title>Protein kinase A represses skeletal myogenesis by targeting myocyte enhancer factor 2D.</title>
        <authorList>
            <person name="Du M."/>
            <person name="Perry R.L.S."/>
            <person name="Nowacki N.B."/>
            <person name="Gordon J.W."/>
            <person name="Salma J."/>
            <person name="Zhao J."/>
            <person name="Aziz A."/>
            <person name="Chan J."/>
            <person name="Siu K.W.M."/>
            <person name="McDermott J.C."/>
        </authorList>
    </citation>
    <scope>PHOSPHORYLATION AT SER-121 AND SER-190</scope>
    <scope>INTERACTION WITH HDAC4</scope>
    <scope>FUNCTION</scope>
    <scope>SUBCELLULAR LOCATION</scope>
    <scope>IDENTIFICATION BY MASS SPECTROMETRY</scope>
    <scope>MUTAGENESIS OF THR-20; SER-121 AND SER-190</scope>
</reference>
<reference key="9">
    <citation type="journal article" date="2009" name="Mol. Cell. Proteomics">
        <title>Large scale localization of protein phosphorylation by use of electron capture dissociation mass spectrometry.</title>
        <authorList>
            <person name="Sweet S.M."/>
            <person name="Bailey C.M."/>
            <person name="Cunningham D.L."/>
            <person name="Heath J.K."/>
            <person name="Cooper H.J."/>
        </authorList>
    </citation>
    <scope>PHOSPHORYLATION [LARGE SCALE ANALYSIS] AT SER-251</scope>
    <scope>IDENTIFICATION BY MASS SPECTROMETRY [LARGE SCALE ANALYSIS]</scope>
    <source>
        <tissue>Embryonic fibroblast</tissue>
    </source>
</reference>
<reference key="10">
    <citation type="journal article" date="2010" name="Cell">
        <title>A tissue-specific atlas of mouse protein phosphorylation and expression.</title>
        <authorList>
            <person name="Huttlin E.L."/>
            <person name="Jedrychowski M.P."/>
            <person name="Elias J.E."/>
            <person name="Goswami T."/>
            <person name="Rad R."/>
            <person name="Beausoleil S.A."/>
            <person name="Villen J."/>
            <person name="Haas W."/>
            <person name="Sowa M.E."/>
            <person name="Gygi S.P."/>
        </authorList>
    </citation>
    <scope>PHOSPHORYLATION [LARGE SCALE ANALYSIS] AT SER-98; SER-106; SER-110 AND SER-231</scope>
    <scope>PHOSPHORYLATION [LARGE SCALE ANALYSIS] AT SER-97 AND THR-107 (ISOFORM MUSCLE)</scope>
    <scope>IDENTIFICATION BY MASS SPECTROMETRY [LARGE SCALE ANALYSIS]</scope>
    <source>
        <tissue>Brain</tissue>
        <tissue>Heart</tissue>
        <tissue>Kidney</tissue>
        <tissue>Lung</tissue>
        <tissue>Spleen</tissue>
    </source>
</reference>
<organism>
    <name type="scientific">Mus musculus</name>
    <name type="common">Mouse</name>
    <dbReference type="NCBI Taxonomy" id="10090"/>
    <lineage>
        <taxon>Eukaryota</taxon>
        <taxon>Metazoa</taxon>
        <taxon>Chordata</taxon>
        <taxon>Craniata</taxon>
        <taxon>Vertebrata</taxon>
        <taxon>Euteleostomi</taxon>
        <taxon>Mammalia</taxon>
        <taxon>Eutheria</taxon>
        <taxon>Euarchontoglires</taxon>
        <taxon>Glires</taxon>
        <taxon>Rodentia</taxon>
        <taxon>Myomorpha</taxon>
        <taxon>Muroidea</taxon>
        <taxon>Muridae</taxon>
        <taxon>Murinae</taxon>
        <taxon>Mus</taxon>
        <taxon>Mus</taxon>
    </lineage>
</organism>
<proteinExistence type="evidence at protein level"/>
<dbReference type="EMBL" id="S68893">
    <property type="protein sequence ID" value="AAB29973.1"/>
    <property type="molecule type" value="mRNA"/>
</dbReference>
<dbReference type="EMBL" id="S68895">
    <property type="protein sequence ID" value="AAB29974.1"/>
    <property type="molecule type" value="mRNA"/>
</dbReference>
<dbReference type="EMBL" id="AC137525">
    <property type="status" value="NOT_ANNOTATED_CDS"/>
    <property type="molecule type" value="Genomic_DNA"/>
</dbReference>
<dbReference type="CCDS" id="CCDS79939.1">
    <molecule id="Q63943-1"/>
</dbReference>
<dbReference type="PIR" id="B56201">
    <property type="entry name" value="B56201"/>
</dbReference>
<dbReference type="RefSeq" id="NP_001297516.1">
    <molecule id="Q63943-1"/>
    <property type="nucleotide sequence ID" value="NM_001310587.2"/>
</dbReference>
<dbReference type="RefSeq" id="NP_001397006.1">
    <molecule id="Q63943-1"/>
    <property type="nucleotide sequence ID" value="NM_001410077.1"/>
</dbReference>
<dbReference type="RefSeq" id="NP_001397007.1">
    <molecule id="Q63943-1"/>
    <property type="nucleotide sequence ID" value="NM_001410078.1"/>
</dbReference>
<dbReference type="RefSeq" id="XP_006501152.1">
    <property type="nucleotide sequence ID" value="XM_006501089.2"/>
</dbReference>
<dbReference type="RefSeq" id="XP_017174961.1">
    <molecule id="Q63943-1"/>
    <property type="nucleotide sequence ID" value="XM_017319472.2"/>
</dbReference>
<dbReference type="RefSeq" id="XP_030108310.1">
    <molecule id="Q63943-1"/>
    <property type="nucleotide sequence ID" value="XM_030252450.2"/>
</dbReference>
<dbReference type="SMR" id="Q63943"/>
<dbReference type="BioGRID" id="201384">
    <property type="interactions" value="9"/>
</dbReference>
<dbReference type="ELM" id="Q63943"/>
<dbReference type="FunCoup" id="Q63943">
    <property type="interactions" value="3250"/>
</dbReference>
<dbReference type="IntAct" id="Q63943">
    <property type="interactions" value="5"/>
</dbReference>
<dbReference type="MINT" id="Q63943"/>
<dbReference type="STRING" id="10090.ENSMUSP00000103184"/>
<dbReference type="GlyGen" id="Q63943">
    <property type="glycosylation" value="4 sites, 1 N-linked glycan (1 site), 1 O-linked glycan (1 site)"/>
</dbReference>
<dbReference type="iPTMnet" id="Q63943"/>
<dbReference type="PhosphoSitePlus" id="Q63943"/>
<dbReference type="jPOST" id="Q63943"/>
<dbReference type="PaxDb" id="10090-ENSMUSP00000001455"/>
<dbReference type="ProteomicsDB" id="295994">
    <molecule id="Q63943-1"/>
</dbReference>
<dbReference type="ProteomicsDB" id="295995">
    <molecule id="Q63943-2"/>
</dbReference>
<dbReference type="Pumba" id="Q63943"/>
<dbReference type="Antibodypedia" id="1437">
    <property type="antibodies" value="507 antibodies from 35 providers"/>
</dbReference>
<dbReference type="DNASU" id="17261"/>
<dbReference type="Ensembl" id="ENSMUST00000107559.3">
    <molecule id="Q63943-1"/>
    <property type="protein sequence ID" value="ENSMUSP00000103184.3"/>
    <property type="gene ID" value="ENSMUSG00000001419.18"/>
</dbReference>
<dbReference type="GeneID" id="17261"/>
<dbReference type="KEGG" id="mmu:17261"/>
<dbReference type="UCSC" id="uc008pua.1">
    <molecule id="Q63943-1"/>
    <property type="organism name" value="mouse"/>
</dbReference>
<dbReference type="AGR" id="MGI:99533"/>
<dbReference type="CTD" id="4209"/>
<dbReference type="MGI" id="MGI:99533">
    <property type="gene designation" value="Mef2d"/>
</dbReference>
<dbReference type="VEuPathDB" id="HostDB:ENSMUSG00000001419"/>
<dbReference type="eggNOG" id="KOG0014">
    <property type="taxonomic scope" value="Eukaryota"/>
</dbReference>
<dbReference type="GeneTree" id="ENSGT00940000159463"/>
<dbReference type="InParanoid" id="Q63943"/>
<dbReference type="OrthoDB" id="1898716at2759"/>
<dbReference type="PhylomeDB" id="Q63943"/>
<dbReference type="Reactome" id="R-MMU-525793">
    <property type="pathway name" value="Myogenesis"/>
</dbReference>
<dbReference type="BioGRID-ORCS" id="17261">
    <property type="hits" value="3 hits in 80 CRISPR screens"/>
</dbReference>
<dbReference type="ChiTaRS" id="Mef2d">
    <property type="organism name" value="mouse"/>
</dbReference>
<dbReference type="PRO" id="PR:Q63943"/>
<dbReference type="Proteomes" id="UP000000589">
    <property type="component" value="Chromosome 3"/>
</dbReference>
<dbReference type="RNAct" id="Q63943">
    <property type="molecule type" value="protein"/>
</dbReference>
<dbReference type="Bgee" id="ENSMUSG00000001419">
    <property type="expression patterns" value="Expressed in ileal epithelium and 275 other cell types or tissues"/>
</dbReference>
<dbReference type="ExpressionAtlas" id="Q63943">
    <property type="expression patterns" value="baseline and differential"/>
</dbReference>
<dbReference type="GO" id="GO:0005737">
    <property type="term" value="C:cytoplasm"/>
    <property type="evidence" value="ECO:0000314"/>
    <property type="project" value="MGI"/>
</dbReference>
<dbReference type="GO" id="GO:0005654">
    <property type="term" value="C:nucleoplasm"/>
    <property type="evidence" value="ECO:0000304"/>
    <property type="project" value="Reactome"/>
</dbReference>
<dbReference type="GO" id="GO:0005634">
    <property type="term" value="C:nucleus"/>
    <property type="evidence" value="ECO:0000314"/>
    <property type="project" value="MGI"/>
</dbReference>
<dbReference type="GO" id="GO:0003677">
    <property type="term" value="F:DNA binding"/>
    <property type="evidence" value="ECO:0000314"/>
    <property type="project" value="MGI"/>
</dbReference>
<dbReference type="GO" id="GO:0001228">
    <property type="term" value="F:DNA-binding transcription activator activity, RNA polymerase II-specific"/>
    <property type="evidence" value="ECO:0000314"/>
    <property type="project" value="NTNU_SB"/>
</dbReference>
<dbReference type="GO" id="GO:0003700">
    <property type="term" value="F:DNA-binding transcription factor activity"/>
    <property type="evidence" value="ECO:0000314"/>
    <property type="project" value="MGI"/>
</dbReference>
<dbReference type="GO" id="GO:0019899">
    <property type="term" value="F:enzyme binding"/>
    <property type="evidence" value="ECO:0000353"/>
    <property type="project" value="BHF-UCL"/>
</dbReference>
<dbReference type="GO" id="GO:0042826">
    <property type="term" value="F:histone deacetylase binding"/>
    <property type="evidence" value="ECO:0000314"/>
    <property type="project" value="MGI"/>
</dbReference>
<dbReference type="GO" id="GO:0046982">
    <property type="term" value="F:protein heterodimerization activity"/>
    <property type="evidence" value="ECO:0000353"/>
    <property type="project" value="UniProtKB"/>
</dbReference>
<dbReference type="GO" id="GO:0042803">
    <property type="term" value="F:protein homodimerization activity"/>
    <property type="evidence" value="ECO:0000353"/>
    <property type="project" value="UniProtKB"/>
</dbReference>
<dbReference type="GO" id="GO:0000978">
    <property type="term" value="F:RNA polymerase II cis-regulatory region sequence-specific DNA binding"/>
    <property type="evidence" value="ECO:0000314"/>
    <property type="project" value="NTNU_SB"/>
</dbReference>
<dbReference type="GO" id="GO:0006915">
    <property type="term" value="P:apoptotic process"/>
    <property type="evidence" value="ECO:0007669"/>
    <property type="project" value="UniProtKB-KW"/>
</dbReference>
<dbReference type="GO" id="GO:0002062">
    <property type="term" value="P:chondrocyte differentiation"/>
    <property type="evidence" value="ECO:0000316"/>
    <property type="project" value="MGI"/>
</dbReference>
<dbReference type="GO" id="GO:0001958">
    <property type="term" value="P:endochondral ossification"/>
    <property type="evidence" value="ECO:0000316"/>
    <property type="project" value="MGI"/>
</dbReference>
<dbReference type="GO" id="GO:0007399">
    <property type="term" value="P:nervous system development"/>
    <property type="evidence" value="ECO:0007669"/>
    <property type="project" value="UniProtKB-KW"/>
</dbReference>
<dbReference type="GO" id="GO:0001649">
    <property type="term" value="P:osteoblast differentiation"/>
    <property type="evidence" value="ECO:0000316"/>
    <property type="project" value="MGI"/>
</dbReference>
<dbReference type="GO" id="GO:0045893">
    <property type="term" value="P:positive regulation of DNA-templated transcription"/>
    <property type="evidence" value="ECO:0000314"/>
    <property type="project" value="MGI"/>
</dbReference>
<dbReference type="GO" id="GO:0045944">
    <property type="term" value="P:positive regulation of transcription by RNA polymerase II"/>
    <property type="evidence" value="ECO:0000314"/>
    <property type="project" value="NTNU_SB"/>
</dbReference>
<dbReference type="GO" id="GO:0006355">
    <property type="term" value="P:regulation of DNA-templated transcription"/>
    <property type="evidence" value="ECO:0000314"/>
    <property type="project" value="MGI"/>
</dbReference>
<dbReference type="GO" id="GO:0035914">
    <property type="term" value="P:skeletal muscle cell differentiation"/>
    <property type="evidence" value="ECO:0000315"/>
    <property type="project" value="MGI"/>
</dbReference>
<dbReference type="CDD" id="cd00265">
    <property type="entry name" value="MADS_MEF2_like"/>
    <property type="match status" value="1"/>
</dbReference>
<dbReference type="FunFam" id="3.40.1810.10:FF:000001">
    <property type="entry name" value="Myocyte-specific enhancer factor 2A homolog"/>
    <property type="match status" value="1"/>
</dbReference>
<dbReference type="Gene3D" id="3.40.1810.10">
    <property type="entry name" value="Transcription factor, MADS-box"/>
    <property type="match status" value="1"/>
</dbReference>
<dbReference type="InterPro" id="IPR022102">
    <property type="entry name" value="HJURP_C"/>
</dbReference>
<dbReference type="InterPro" id="IPR033896">
    <property type="entry name" value="MEF2-like_N"/>
</dbReference>
<dbReference type="InterPro" id="IPR002100">
    <property type="entry name" value="TF_MADSbox"/>
</dbReference>
<dbReference type="InterPro" id="IPR036879">
    <property type="entry name" value="TF_MADSbox_sf"/>
</dbReference>
<dbReference type="PANTHER" id="PTHR11945">
    <property type="entry name" value="MADS BOX PROTEIN"/>
    <property type="match status" value="1"/>
</dbReference>
<dbReference type="PANTHER" id="PTHR11945:SF23">
    <property type="entry name" value="MYOCYTE-SPECIFIC ENHANCER FACTOR 2D"/>
    <property type="match status" value="1"/>
</dbReference>
<dbReference type="Pfam" id="PF12347">
    <property type="entry name" value="HJURP_C"/>
    <property type="match status" value="1"/>
</dbReference>
<dbReference type="Pfam" id="PF00319">
    <property type="entry name" value="SRF-TF"/>
    <property type="match status" value="1"/>
</dbReference>
<dbReference type="PRINTS" id="PR00404">
    <property type="entry name" value="MADSDOMAIN"/>
</dbReference>
<dbReference type="SMART" id="SM00432">
    <property type="entry name" value="MADS"/>
    <property type="match status" value="1"/>
</dbReference>
<dbReference type="SUPFAM" id="SSF55455">
    <property type="entry name" value="SRF-like"/>
    <property type="match status" value="1"/>
</dbReference>
<dbReference type="PROSITE" id="PS00350">
    <property type="entry name" value="MADS_BOX_1"/>
    <property type="match status" value="1"/>
</dbReference>
<dbReference type="PROSITE" id="PS50066">
    <property type="entry name" value="MADS_BOX_2"/>
    <property type="match status" value="1"/>
</dbReference>
<protein>
    <recommendedName>
        <fullName>Myocyte-specific enhancer factor 2D</fullName>
    </recommendedName>
</protein>
<name>MEF2D_MOUSE</name>
<gene>
    <name type="primary">Mef2d</name>
</gene>
<feature type="chain" id="PRO_0000199436" description="Myocyte-specific enhancer factor 2D">
    <location>
        <begin position="1"/>
        <end position="514"/>
    </location>
</feature>
<feature type="domain" description="MADS-box" evidence="5">
    <location>
        <begin position="3"/>
        <end position="57"/>
    </location>
</feature>
<feature type="DNA-binding region" description="Mef2-type" evidence="4">
    <location>
        <begin position="58"/>
        <end position="86"/>
    </location>
</feature>
<feature type="region of interest" description="Disordered" evidence="6">
    <location>
        <begin position="174"/>
        <end position="207"/>
    </location>
</feature>
<feature type="region of interest" description="Disordered" evidence="6">
    <location>
        <begin position="244"/>
        <end position="269"/>
    </location>
</feature>
<feature type="region of interest" description="Beta domain" evidence="1">
    <location>
        <begin position="286"/>
        <end position="292"/>
    </location>
</feature>
<feature type="region of interest" description="Disordered" evidence="6">
    <location>
        <begin position="364"/>
        <end position="399"/>
    </location>
</feature>
<feature type="region of interest" description="Disordered" evidence="6">
    <location>
        <begin position="430"/>
        <end position="514"/>
    </location>
</feature>
<feature type="compositionally biased region" description="Polar residues" evidence="6">
    <location>
        <begin position="180"/>
        <end position="192"/>
    </location>
</feature>
<feature type="compositionally biased region" description="Pro residues" evidence="6">
    <location>
        <begin position="367"/>
        <end position="396"/>
    </location>
</feature>
<feature type="site" description="Cleavage" evidence="13">
    <location>
        <begin position="288"/>
        <end position="289"/>
    </location>
</feature>
<feature type="modified residue" description="Phosphoserine" evidence="15">
    <location>
        <position position="98"/>
    </location>
</feature>
<feature type="modified residue" description="Phosphoserine" evidence="15">
    <location>
        <position position="106"/>
    </location>
</feature>
<feature type="modified residue" description="Phosphoserine" evidence="15">
    <location>
        <position position="110"/>
    </location>
</feature>
<feature type="modified residue" description="Phosphoserine; by PKA" evidence="10">
    <location>
        <position position="121"/>
    </location>
</feature>
<feature type="modified residue" description="Phosphoserine; by MAPK7" evidence="3">
    <location>
        <position position="180"/>
    </location>
</feature>
<feature type="modified residue" description="Phosphoserine; by PKA" evidence="10">
    <location>
        <position position="190"/>
    </location>
</feature>
<feature type="modified residue" description="Phosphoserine" evidence="15">
    <location>
        <position position="231"/>
    </location>
</feature>
<feature type="modified residue" description="N6-acetyllysine" evidence="3">
    <location>
        <position position="245"/>
    </location>
</feature>
<feature type="modified residue" description="Phosphoserine" evidence="14">
    <location>
        <position position="251"/>
    </location>
</feature>
<feature type="modified residue" description="N6-acetyllysine; alternate" evidence="3">
    <location>
        <position position="432"/>
    </location>
</feature>
<feature type="modified residue" description="Phosphoserine" evidence="8">
    <location>
        <position position="437"/>
    </location>
</feature>
<feature type="cross-link" description="Glycyl lysine isopeptide (Lys-Gly) (interchain with G-Cter in SUMO); alternate" evidence="1">
    <location>
        <position position="432"/>
    </location>
</feature>
<feature type="splice variant" id="VSP_006253" description="In isoform Muscle." evidence="12">
    <original>TLRKKGFNGCDSPEPDGEDSLEQSPLLEDKYRRASEELDGLFRRYG</original>
    <variation>ALHNNDRECESPEVDEAFALTPQTEEKYKKIDEEKYKKIDEEFDKMMQSYRLA</variation>
    <location>
        <begin position="87"/>
        <end position="132"/>
    </location>
</feature>
<feature type="splice variant" id="VSP_006254" description="In isoform Muscle." evidence="12">
    <location>
        <begin position="286"/>
        <end position="292"/>
    </location>
</feature>
<feature type="mutagenesis site" description="No change in DNA-binding activity." evidence="10">
    <original>T</original>
    <variation>A</variation>
    <location>
        <position position="20"/>
    </location>
</feature>
<feature type="mutagenesis site" description="Dramatic decrease in DNA-binding." evidence="10">
    <original>T</original>
    <variation>D</variation>
    <location>
        <position position="20"/>
    </location>
</feature>
<feature type="mutagenesis site" description="Abolishes phosphorylation by PKA. No change in protein levels. Loss of protein stability on PKA stimulation. Loss of PKA-mediated repression. No change in interaction with HDAC4 in response to PKA; when associated with A-190." evidence="10">
    <original>S</original>
    <variation>A</variation>
    <location>
        <position position="121"/>
    </location>
</feature>
<feature type="mutagenesis site" description="Abolishes phosphorylation by PKA. No change in protein levels. Loss of protein stability on PKA stimulation mediated repression. No change in interaction with HDAC4 in response to PKA; when associated with A-121." evidence="10">
    <original>S</original>
    <variation>A</variation>
    <location>
        <position position="190"/>
    </location>
</feature>
<feature type="mutagenesis site" description="Loss of calpain/Cdk5-mediated neuron apoptosis." evidence="8">
    <original>S</original>
    <variation>A</variation>
    <location>
        <position position="437"/>
    </location>
</feature>
<feature type="sequence conflict" description="In Ref. 1; AAB29973." evidence="13" ref="1">
    <original>E</original>
    <variation>G</variation>
    <location>
        <position position="287"/>
    </location>
</feature>
<feature type="modified residue" description="Phosphoserine" evidence="15">
    <location sequence="Q63943-2">
        <position position="97"/>
    </location>
</feature>
<feature type="modified residue" description="Phosphothreonine" evidence="15">
    <location sequence="Q63943-2">
        <position position="107"/>
    </location>
</feature>